<dbReference type="EC" id="1.14.-.-"/>
<dbReference type="EMBL" id="AE014296">
    <property type="protein sequence ID" value="AAF50549.2"/>
    <property type="molecule type" value="Genomic_DNA"/>
</dbReference>
<dbReference type="EMBL" id="AY058442">
    <property type="protein sequence ID" value="AAL13671.1"/>
    <property type="molecule type" value="mRNA"/>
</dbReference>
<dbReference type="EMBL" id="U34329">
    <property type="protein sequence ID" value="AAA80663.1"/>
    <property type="molecule type" value="mRNA"/>
</dbReference>
<dbReference type="RefSeq" id="NP_523961.1">
    <property type="nucleotide sequence ID" value="NM_079237.2"/>
</dbReference>
<dbReference type="SMR" id="Q9VS79"/>
<dbReference type="FunCoup" id="Q9VS79">
    <property type="interactions" value="9"/>
</dbReference>
<dbReference type="STRING" id="7227.FBpp0076543"/>
<dbReference type="PaxDb" id="7227-FBpp0076543"/>
<dbReference type="DNASU" id="38841"/>
<dbReference type="EnsemblMetazoa" id="FBtr0479896">
    <property type="protein sequence ID" value="FBpp0428229"/>
    <property type="gene ID" value="FBgn0015033"/>
</dbReference>
<dbReference type="GeneID" id="38841"/>
<dbReference type="KEGG" id="dme:Dmel_CG4321"/>
<dbReference type="AGR" id="FB:FBgn0015033"/>
<dbReference type="CTD" id="38841"/>
<dbReference type="FlyBase" id="FBgn0015033">
    <property type="gene designation" value="Cyp4d8"/>
</dbReference>
<dbReference type="VEuPathDB" id="VectorBase:FBgn0015033"/>
<dbReference type="eggNOG" id="KOG0157">
    <property type="taxonomic scope" value="Eukaryota"/>
</dbReference>
<dbReference type="GeneTree" id="ENSGT00940000165700"/>
<dbReference type="HOGENOM" id="CLU_001570_5_1_1"/>
<dbReference type="InParanoid" id="Q9VS79"/>
<dbReference type="OrthoDB" id="1470350at2759"/>
<dbReference type="PhylomeDB" id="Q9VS79"/>
<dbReference type="Reactome" id="R-DME-193144">
    <property type="pathway name" value="Estrogen biosynthesis"/>
</dbReference>
<dbReference type="Reactome" id="R-DME-211976">
    <property type="pathway name" value="Endogenous sterols"/>
</dbReference>
<dbReference type="BioGRID-ORCS" id="38841">
    <property type="hits" value="0 hits in 1 CRISPR screen"/>
</dbReference>
<dbReference type="GenomeRNAi" id="38841"/>
<dbReference type="PRO" id="PR:Q9VS79"/>
<dbReference type="Proteomes" id="UP000000803">
    <property type="component" value="Chromosome 3L"/>
</dbReference>
<dbReference type="Bgee" id="FBgn0015033">
    <property type="expression patterns" value="Expressed in oviduct (Drosophila) and 48 other cell types or tissues"/>
</dbReference>
<dbReference type="GO" id="GO:0005789">
    <property type="term" value="C:endoplasmic reticulum membrane"/>
    <property type="evidence" value="ECO:0007669"/>
    <property type="project" value="UniProtKB-SubCell"/>
</dbReference>
<dbReference type="GO" id="GO:0020037">
    <property type="term" value="F:heme binding"/>
    <property type="evidence" value="ECO:0007669"/>
    <property type="project" value="InterPro"/>
</dbReference>
<dbReference type="GO" id="GO:0005506">
    <property type="term" value="F:iron ion binding"/>
    <property type="evidence" value="ECO:0007669"/>
    <property type="project" value="InterPro"/>
</dbReference>
<dbReference type="GO" id="GO:0004497">
    <property type="term" value="F:monooxygenase activity"/>
    <property type="evidence" value="ECO:0007669"/>
    <property type="project" value="UniProtKB-KW"/>
</dbReference>
<dbReference type="GO" id="GO:0016705">
    <property type="term" value="F:oxidoreductase activity, acting on paired donors, with incorporation or reduction of molecular oxygen"/>
    <property type="evidence" value="ECO:0007669"/>
    <property type="project" value="InterPro"/>
</dbReference>
<dbReference type="CDD" id="cd20628">
    <property type="entry name" value="CYP4"/>
    <property type="match status" value="1"/>
</dbReference>
<dbReference type="Gene3D" id="1.10.630.10">
    <property type="entry name" value="Cytochrome P450"/>
    <property type="match status" value="1"/>
</dbReference>
<dbReference type="InterPro" id="IPR001128">
    <property type="entry name" value="Cyt_P450"/>
</dbReference>
<dbReference type="InterPro" id="IPR017972">
    <property type="entry name" value="Cyt_P450_CS"/>
</dbReference>
<dbReference type="InterPro" id="IPR002401">
    <property type="entry name" value="Cyt_P450_E_grp-I"/>
</dbReference>
<dbReference type="InterPro" id="IPR036396">
    <property type="entry name" value="Cyt_P450_sf"/>
</dbReference>
<dbReference type="InterPro" id="IPR050196">
    <property type="entry name" value="Cytochrome_P450_Monoox"/>
</dbReference>
<dbReference type="PANTHER" id="PTHR24291:SF187">
    <property type="entry name" value="CYTOCHROME P450 4AE1-RELATED"/>
    <property type="match status" value="1"/>
</dbReference>
<dbReference type="PANTHER" id="PTHR24291">
    <property type="entry name" value="CYTOCHROME P450 FAMILY 4"/>
    <property type="match status" value="1"/>
</dbReference>
<dbReference type="Pfam" id="PF00067">
    <property type="entry name" value="p450"/>
    <property type="match status" value="1"/>
</dbReference>
<dbReference type="PRINTS" id="PR00463">
    <property type="entry name" value="EP450I"/>
</dbReference>
<dbReference type="PRINTS" id="PR00385">
    <property type="entry name" value="P450"/>
</dbReference>
<dbReference type="SUPFAM" id="SSF48264">
    <property type="entry name" value="Cytochrome P450"/>
    <property type="match status" value="1"/>
</dbReference>
<dbReference type="PROSITE" id="PS00086">
    <property type="entry name" value="CYTOCHROME_P450"/>
    <property type="match status" value="1"/>
</dbReference>
<evidence type="ECO:0000250" key="1"/>
<evidence type="ECO:0000305" key="2"/>
<comment type="function">
    <text evidence="1">May be involved in the metabolism of insect hormones and in the breakdown of synthetic insecticides.</text>
</comment>
<comment type="cofactor">
    <cofactor evidence="1">
        <name>heme</name>
        <dbReference type="ChEBI" id="CHEBI:30413"/>
    </cofactor>
</comment>
<comment type="subcellular location">
    <subcellularLocation>
        <location evidence="2">Endoplasmic reticulum membrane</location>
        <topology evidence="2">Peripheral membrane protein</topology>
    </subcellularLocation>
    <subcellularLocation>
        <location evidence="2">Microsome membrane</location>
        <topology evidence="2">Peripheral membrane protein</topology>
    </subcellularLocation>
</comment>
<comment type="similarity">
    <text evidence="2">Belongs to the cytochrome P450 family.</text>
</comment>
<proteinExistence type="evidence at transcript level"/>
<sequence>MQLMLRLNPKTFIKVGREYVLKFGHLQRVWIFNRLLIMSGDAELNEQLLSSQEHLVKHPVYKVLGQWLGNGLLLSDGKVWHQRRKIITPTFHFSILEQFVEVFDQQSNICVQRLAQKANGNTFDVYRSICAAALDIIAETAMGTKIYAQANESTPYAEAVNECTALLSWRFMSVYLQVELLFTLTHPHLKWRQTQLIRTMQEFTIKVIEKRRQALEDQQSKLMDTADEDVGSKRRMALLDVLLMSTVDGRPLTNDEIREEVDTFMFEGHDTTTSALSFCLHELSRHPEVQAKMLEEIVQVLGTDRSRPVSIRDLGELKYMECVIKESLRMYPPVPIVGRKLQTDFKYTHSVHGDGVIPAGSEIIIGIFGVHRQPETFPNPDEFIPERHENGSRVAPFKMIPFSAGPRNCIGQKFAQLEMKMMLAKIVREYELLPMGQRVECIVNIVLRSETGFQLGMRKRKHN</sequence>
<reference key="1">
    <citation type="journal article" date="2000" name="Science">
        <title>The genome sequence of Drosophila melanogaster.</title>
        <authorList>
            <person name="Adams M.D."/>
            <person name="Celniker S.E."/>
            <person name="Holt R.A."/>
            <person name="Evans C.A."/>
            <person name="Gocayne J.D."/>
            <person name="Amanatides P.G."/>
            <person name="Scherer S.E."/>
            <person name="Li P.W."/>
            <person name="Hoskins R.A."/>
            <person name="Galle R.F."/>
            <person name="George R.A."/>
            <person name="Lewis S.E."/>
            <person name="Richards S."/>
            <person name="Ashburner M."/>
            <person name="Henderson S.N."/>
            <person name="Sutton G.G."/>
            <person name="Wortman J.R."/>
            <person name="Yandell M.D."/>
            <person name="Zhang Q."/>
            <person name="Chen L.X."/>
            <person name="Brandon R.C."/>
            <person name="Rogers Y.-H.C."/>
            <person name="Blazej R.G."/>
            <person name="Champe M."/>
            <person name="Pfeiffer B.D."/>
            <person name="Wan K.H."/>
            <person name="Doyle C."/>
            <person name="Baxter E.G."/>
            <person name="Helt G."/>
            <person name="Nelson C.R."/>
            <person name="Miklos G.L.G."/>
            <person name="Abril J.F."/>
            <person name="Agbayani A."/>
            <person name="An H.-J."/>
            <person name="Andrews-Pfannkoch C."/>
            <person name="Baldwin D."/>
            <person name="Ballew R.M."/>
            <person name="Basu A."/>
            <person name="Baxendale J."/>
            <person name="Bayraktaroglu L."/>
            <person name="Beasley E.M."/>
            <person name="Beeson K.Y."/>
            <person name="Benos P.V."/>
            <person name="Berman B.P."/>
            <person name="Bhandari D."/>
            <person name="Bolshakov S."/>
            <person name="Borkova D."/>
            <person name="Botchan M.R."/>
            <person name="Bouck J."/>
            <person name="Brokstein P."/>
            <person name="Brottier P."/>
            <person name="Burtis K.C."/>
            <person name="Busam D.A."/>
            <person name="Butler H."/>
            <person name="Cadieu E."/>
            <person name="Center A."/>
            <person name="Chandra I."/>
            <person name="Cherry J.M."/>
            <person name="Cawley S."/>
            <person name="Dahlke C."/>
            <person name="Davenport L.B."/>
            <person name="Davies P."/>
            <person name="de Pablos B."/>
            <person name="Delcher A."/>
            <person name="Deng Z."/>
            <person name="Mays A.D."/>
            <person name="Dew I."/>
            <person name="Dietz S.M."/>
            <person name="Dodson K."/>
            <person name="Doup L.E."/>
            <person name="Downes M."/>
            <person name="Dugan-Rocha S."/>
            <person name="Dunkov B.C."/>
            <person name="Dunn P."/>
            <person name="Durbin K.J."/>
            <person name="Evangelista C.C."/>
            <person name="Ferraz C."/>
            <person name="Ferriera S."/>
            <person name="Fleischmann W."/>
            <person name="Fosler C."/>
            <person name="Gabrielian A.E."/>
            <person name="Garg N.S."/>
            <person name="Gelbart W.M."/>
            <person name="Glasser K."/>
            <person name="Glodek A."/>
            <person name="Gong F."/>
            <person name="Gorrell J.H."/>
            <person name="Gu Z."/>
            <person name="Guan P."/>
            <person name="Harris M."/>
            <person name="Harris N.L."/>
            <person name="Harvey D.A."/>
            <person name="Heiman T.J."/>
            <person name="Hernandez J.R."/>
            <person name="Houck J."/>
            <person name="Hostin D."/>
            <person name="Houston K.A."/>
            <person name="Howland T.J."/>
            <person name="Wei M.-H."/>
            <person name="Ibegwam C."/>
            <person name="Jalali M."/>
            <person name="Kalush F."/>
            <person name="Karpen G.H."/>
            <person name="Ke Z."/>
            <person name="Kennison J.A."/>
            <person name="Ketchum K.A."/>
            <person name="Kimmel B.E."/>
            <person name="Kodira C.D."/>
            <person name="Kraft C.L."/>
            <person name="Kravitz S."/>
            <person name="Kulp D."/>
            <person name="Lai Z."/>
            <person name="Lasko P."/>
            <person name="Lei Y."/>
            <person name="Levitsky A.A."/>
            <person name="Li J.H."/>
            <person name="Li Z."/>
            <person name="Liang Y."/>
            <person name="Lin X."/>
            <person name="Liu X."/>
            <person name="Mattei B."/>
            <person name="McIntosh T.C."/>
            <person name="McLeod M.P."/>
            <person name="McPherson D."/>
            <person name="Merkulov G."/>
            <person name="Milshina N.V."/>
            <person name="Mobarry C."/>
            <person name="Morris J."/>
            <person name="Moshrefi A."/>
            <person name="Mount S.M."/>
            <person name="Moy M."/>
            <person name="Murphy B."/>
            <person name="Murphy L."/>
            <person name="Muzny D.M."/>
            <person name="Nelson D.L."/>
            <person name="Nelson D.R."/>
            <person name="Nelson K.A."/>
            <person name="Nixon K."/>
            <person name="Nusskern D.R."/>
            <person name="Pacleb J.M."/>
            <person name="Palazzolo M."/>
            <person name="Pittman G.S."/>
            <person name="Pan S."/>
            <person name="Pollard J."/>
            <person name="Puri V."/>
            <person name="Reese M.G."/>
            <person name="Reinert K."/>
            <person name="Remington K."/>
            <person name="Saunders R.D.C."/>
            <person name="Scheeler F."/>
            <person name="Shen H."/>
            <person name="Shue B.C."/>
            <person name="Siden-Kiamos I."/>
            <person name="Simpson M."/>
            <person name="Skupski M.P."/>
            <person name="Smith T.J."/>
            <person name="Spier E."/>
            <person name="Spradling A.C."/>
            <person name="Stapleton M."/>
            <person name="Strong R."/>
            <person name="Sun E."/>
            <person name="Svirskas R."/>
            <person name="Tector C."/>
            <person name="Turner R."/>
            <person name="Venter E."/>
            <person name="Wang A.H."/>
            <person name="Wang X."/>
            <person name="Wang Z.-Y."/>
            <person name="Wassarman D.A."/>
            <person name="Weinstock G.M."/>
            <person name="Weissenbach J."/>
            <person name="Williams S.M."/>
            <person name="Woodage T."/>
            <person name="Worley K.C."/>
            <person name="Wu D."/>
            <person name="Yang S."/>
            <person name="Yao Q.A."/>
            <person name="Ye J."/>
            <person name="Yeh R.-F."/>
            <person name="Zaveri J.S."/>
            <person name="Zhan M."/>
            <person name="Zhang G."/>
            <person name="Zhao Q."/>
            <person name="Zheng L."/>
            <person name="Zheng X.H."/>
            <person name="Zhong F.N."/>
            <person name="Zhong W."/>
            <person name="Zhou X."/>
            <person name="Zhu S.C."/>
            <person name="Zhu X."/>
            <person name="Smith H.O."/>
            <person name="Gibbs R.A."/>
            <person name="Myers E.W."/>
            <person name="Rubin G.M."/>
            <person name="Venter J.C."/>
        </authorList>
    </citation>
    <scope>NUCLEOTIDE SEQUENCE [LARGE SCALE GENOMIC DNA]</scope>
    <source>
        <strain>Berkeley</strain>
    </source>
</reference>
<reference key="2">
    <citation type="journal article" date="2002" name="Genome Biol.">
        <title>Annotation of the Drosophila melanogaster euchromatic genome: a systematic review.</title>
        <authorList>
            <person name="Misra S."/>
            <person name="Crosby M.A."/>
            <person name="Mungall C.J."/>
            <person name="Matthews B.B."/>
            <person name="Campbell K.S."/>
            <person name="Hradecky P."/>
            <person name="Huang Y."/>
            <person name="Kaminker J.S."/>
            <person name="Millburn G.H."/>
            <person name="Prochnik S.E."/>
            <person name="Smith C.D."/>
            <person name="Tupy J.L."/>
            <person name="Whitfield E.J."/>
            <person name="Bayraktaroglu L."/>
            <person name="Berman B.P."/>
            <person name="Bettencourt B.R."/>
            <person name="Celniker S.E."/>
            <person name="de Grey A.D.N.J."/>
            <person name="Drysdale R.A."/>
            <person name="Harris N.L."/>
            <person name="Richter J."/>
            <person name="Russo S."/>
            <person name="Schroeder A.J."/>
            <person name="Shu S.Q."/>
            <person name="Stapleton M."/>
            <person name="Yamada C."/>
            <person name="Ashburner M."/>
            <person name="Gelbart W.M."/>
            <person name="Rubin G.M."/>
            <person name="Lewis S.E."/>
        </authorList>
    </citation>
    <scope>GENOME REANNOTATION</scope>
    <source>
        <strain>Berkeley</strain>
    </source>
</reference>
<reference key="3">
    <citation type="journal article" date="2002" name="Genome Biol.">
        <title>A Drosophila full-length cDNA resource.</title>
        <authorList>
            <person name="Stapleton M."/>
            <person name="Carlson J.W."/>
            <person name="Brokstein P."/>
            <person name="Yu C."/>
            <person name="Champe M."/>
            <person name="George R.A."/>
            <person name="Guarin H."/>
            <person name="Kronmiller B."/>
            <person name="Pacleb J.M."/>
            <person name="Park S."/>
            <person name="Wan K.H."/>
            <person name="Rubin G.M."/>
            <person name="Celniker S.E."/>
        </authorList>
    </citation>
    <scope>NUCLEOTIDE SEQUENCE [LARGE SCALE MRNA]</scope>
    <source>
        <strain>Berkeley</strain>
        <tissue>Head</tissue>
    </source>
</reference>
<reference key="4">
    <citation type="journal article" date="1996" name="Mol. Gen. Genet.">
        <title>Cytochrome P450 gene clusters in Drosophila melanogaster.</title>
        <authorList>
            <person name="Dunkov B.C."/>
            <person name="Rodriguez-Arnaiz R."/>
            <person name="Pittendrigh B."/>
            <person name="ffrench-Constant R.H."/>
            <person name="Feyereisen R."/>
        </authorList>
    </citation>
    <scope>NUCLEOTIDE SEQUENCE [MRNA] OF 273-400</scope>
    <source>
        <strain>Haag-79</strain>
    </source>
</reference>
<name>CP4D8_DROME</name>
<protein>
    <recommendedName>
        <fullName>Cytochrome P450 4d8</fullName>
        <ecNumber>1.14.-.-</ecNumber>
    </recommendedName>
    <alternativeName>
        <fullName>CYPIVD8</fullName>
    </alternativeName>
</protein>
<accession>Q9VS79</accession>
<accession>Q24127</accession>
<accession>Q95TY3</accession>
<feature type="chain" id="PRO_0000051835" description="Cytochrome P450 4d8">
    <location>
        <begin position="1"/>
        <end position="463"/>
    </location>
</feature>
<feature type="binding site" description="covalent" evidence="1">
    <location>
        <position position="267"/>
    </location>
    <ligand>
        <name>heme</name>
        <dbReference type="ChEBI" id="CHEBI:30413"/>
    </ligand>
</feature>
<feature type="binding site" description="axial binding residue" evidence="1">
    <location>
        <position position="409"/>
    </location>
    <ligand>
        <name>heme</name>
        <dbReference type="ChEBI" id="CHEBI:30413"/>
    </ligand>
    <ligandPart>
        <name>Fe</name>
        <dbReference type="ChEBI" id="CHEBI:18248"/>
    </ligandPart>
</feature>
<feature type="sequence conflict" description="In Ref. 4; AAA80663." evidence="2" ref="4">
    <original>A</original>
    <variation>E</variation>
    <location>
        <position position="291"/>
    </location>
</feature>
<feature type="sequence conflict" description="In Ref. 4; AAA80663." evidence="2" ref="4">
    <original>R</original>
    <variation>C</variation>
    <location>
        <position position="393"/>
    </location>
</feature>
<keyword id="KW-0256">Endoplasmic reticulum</keyword>
<keyword id="KW-0349">Heme</keyword>
<keyword id="KW-0408">Iron</keyword>
<keyword id="KW-0472">Membrane</keyword>
<keyword id="KW-0479">Metal-binding</keyword>
<keyword id="KW-0492">Microsome</keyword>
<keyword id="KW-0503">Monooxygenase</keyword>
<keyword id="KW-0560">Oxidoreductase</keyword>
<keyword id="KW-1185">Reference proteome</keyword>
<organism>
    <name type="scientific">Drosophila melanogaster</name>
    <name type="common">Fruit fly</name>
    <dbReference type="NCBI Taxonomy" id="7227"/>
    <lineage>
        <taxon>Eukaryota</taxon>
        <taxon>Metazoa</taxon>
        <taxon>Ecdysozoa</taxon>
        <taxon>Arthropoda</taxon>
        <taxon>Hexapoda</taxon>
        <taxon>Insecta</taxon>
        <taxon>Pterygota</taxon>
        <taxon>Neoptera</taxon>
        <taxon>Endopterygota</taxon>
        <taxon>Diptera</taxon>
        <taxon>Brachycera</taxon>
        <taxon>Muscomorpha</taxon>
        <taxon>Ephydroidea</taxon>
        <taxon>Drosophilidae</taxon>
        <taxon>Drosophila</taxon>
        <taxon>Sophophora</taxon>
    </lineage>
</organism>
<gene>
    <name type="primary">Cyp4d8</name>
    <name type="ORF">CG4321</name>
</gene>